<keyword id="KW-0007">Acetylation</keyword>
<keyword id="KW-0325">Glycoprotein</keyword>
<keyword id="KW-0496">Mitochondrion</keyword>
<keyword id="KW-0597">Phosphoprotein</keyword>
<keyword id="KW-1185">Reference proteome</keyword>
<keyword id="KW-0677">Repeat</keyword>
<keyword id="KW-0694">RNA-binding</keyword>
<keyword id="KW-0808">Transferase</keyword>
<proteinExistence type="evidence at protein level"/>
<protein>
    <recommendedName>
        <fullName>Thiosulfate sulfurtransferase</fullName>
        <ecNumber>2.8.1.1</ecNumber>
    </recommendedName>
    <alternativeName>
        <fullName>Rhodanese</fullName>
    </alternativeName>
</protein>
<dbReference type="EC" id="2.8.1.1"/>
<dbReference type="EMBL" id="U35741">
    <property type="protein sequence ID" value="AAC52342.1"/>
    <property type="molecule type" value="mRNA"/>
</dbReference>
<dbReference type="EMBL" id="BC005644">
    <property type="protein sequence ID" value="AAH05644.1"/>
    <property type="molecule type" value="mRNA"/>
</dbReference>
<dbReference type="CCDS" id="CCDS27614.1"/>
<dbReference type="PIR" id="JC4398">
    <property type="entry name" value="JC4398"/>
</dbReference>
<dbReference type="RefSeq" id="NP_033463.1">
    <property type="nucleotide sequence ID" value="NM_009437.5"/>
</dbReference>
<dbReference type="SMR" id="P52196"/>
<dbReference type="FunCoup" id="P52196">
    <property type="interactions" value="1570"/>
</dbReference>
<dbReference type="STRING" id="10090.ENSMUSP00000055743"/>
<dbReference type="GlyCosmos" id="P52196">
    <property type="glycosylation" value="1 site, No reported glycans"/>
</dbReference>
<dbReference type="GlyGen" id="P52196">
    <property type="glycosylation" value="2 sites, 1 O-linked glycan (1 site)"/>
</dbReference>
<dbReference type="iPTMnet" id="P52196"/>
<dbReference type="PhosphoSitePlus" id="P52196"/>
<dbReference type="SwissPalm" id="P52196"/>
<dbReference type="REPRODUCTION-2DPAGE" id="P52196"/>
<dbReference type="jPOST" id="P52196"/>
<dbReference type="PaxDb" id="10090-ENSMUSP00000055743"/>
<dbReference type="PeptideAtlas" id="P52196"/>
<dbReference type="ProteomicsDB" id="258876"/>
<dbReference type="Pumba" id="P52196"/>
<dbReference type="Antibodypedia" id="302">
    <property type="antibodies" value="159 antibodies from 30 providers"/>
</dbReference>
<dbReference type="DNASU" id="22117"/>
<dbReference type="Ensembl" id="ENSMUST00000058659.9">
    <property type="protein sequence ID" value="ENSMUSP00000055743.8"/>
    <property type="gene ID" value="ENSMUSG00000044986.11"/>
</dbReference>
<dbReference type="GeneID" id="22117"/>
<dbReference type="KEGG" id="mmu:22117"/>
<dbReference type="UCSC" id="uc007wpd.1">
    <property type="organism name" value="mouse"/>
</dbReference>
<dbReference type="AGR" id="MGI:98852"/>
<dbReference type="CTD" id="7263"/>
<dbReference type="MGI" id="MGI:98852">
    <property type="gene designation" value="Tst"/>
</dbReference>
<dbReference type="VEuPathDB" id="HostDB:ENSMUSG00000044986"/>
<dbReference type="eggNOG" id="KOG1529">
    <property type="taxonomic scope" value="Eukaryota"/>
</dbReference>
<dbReference type="GeneTree" id="ENSGT00510000046773"/>
<dbReference type="HOGENOM" id="CLU_031618_3_1_1"/>
<dbReference type="InParanoid" id="P52196"/>
<dbReference type="OMA" id="YPRVKGY"/>
<dbReference type="OrthoDB" id="270167at2759"/>
<dbReference type="PhylomeDB" id="P52196"/>
<dbReference type="TreeFam" id="TF315133"/>
<dbReference type="Reactome" id="R-MMU-1614558">
    <property type="pathway name" value="Degradation of cysteine and homocysteine"/>
</dbReference>
<dbReference type="SABIO-RK" id="P52196"/>
<dbReference type="BioGRID-ORCS" id="22117">
    <property type="hits" value="3 hits in 76 CRISPR screens"/>
</dbReference>
<dbReference type="ChiTaRS" id="Tst">
    <property type="organism name" value="mouse"/>
</dbReference>
<dbReference type="PRO" id="PR:P52196"/>
<dbReference type="Proteomes" id="UP000000589">
    <property type="component" value="Chromosome 15"/>
</dbReference>
<dbReference type="RNAct" id="P52196">
    <property type="molecule type" value="protein"/>
</dbReference>
<dbReference type="Bgee" id="ENSMUSG00000044986">
    <property type="expression patterns" value="Expressed in olfactory epithelium and 223 other cell types or tissues"/>
</dbReference>
<dbReference type="ExpressionAtlas" id="P52196">
    <property type="expression patterns" value="baseline and differential"/>
</dbReference>
<dbReference type="GO" id="GO:0005743">
    <property type="term" value="C:mitochondrial inner membrane"/>
    <property type="evidence" value="ECO:0007005"/>
    <property type="project" value="MGI"/>
</dbReference>
<dbReference type="GO" id="GO:0005759">
    <property type="term" value="C:mitochondrial matrix"/>
    <property type="evidence" value="ECO:0007669"/>
    <property type="project" value="UniProtKB-SubCell"/>
</dbReference>
<dbReference type="GO" id="GO:0005739">
    <property type="term" value="C:mitochondrion"/>
    <property type="evidence" value="ECO:0007005"/>
    <property type="project" value="MGI"/>
</dbReference>
<dbReference type="GO" id="GO:0008097">
    <property type="term" value="F:5S rRNA binding"/>
    <property type="evidence" value="ECO:0000250"/>
    <property type="project" value="UniProtKB"/>
</dbReference>
<dbReference type="GO" id="GO:0004792">
    <property type="term" value="F:thiosulfate-cyanide sulfurtransferase activity"/>
    <property type="evidence" value="ECO:0007669"/>
    <property type="project" value="UniProtKB-EC"/>
</dbReference>
<dbReference type="GO" id="GO:0030855">
    <property type="term" value="P:epithelial cell differentiation"/>
    <property type="evidence" value="ECO:0007669"/>
    <property type="project" value="Ensembl"/>
</dbReference>
<dbReference type="GO" id="GO:0035928">
    <property type="term" value="P:rRNA import into mitochondrion"/>
    <property type="evidence" value="ECO:0000250"/>
    <property type="project" value="UniProtKB"/>
</dbReference>
<dbReference type="GO" id="GO:0051029">
    <property type="term" value="P:rRNA transport"/>
    <property type="evidence" value="ECO:0000250"/>
    <property type="project" value="UniProtKB"/>
</dbReference>
<dbReference type="CDD" id="cd01449">
    <property type="entry name" value="TST_Repeat_2"/>
    <property type="match status" value="1"/>
</dbReference>
<dbReference type="CDD" id="cd01445">
    <property type="entry name" value="TST_Repeats"/>
    <property type="match status" value="1"/>
</dbReference>
<dbReference type="FunFam" id="3.40.250.10:FF:000001">
    <property type="entry name" value="Sulfurtransferase"/>
    <property type="match status" value="1"/>
</dbReference>
<dbReference type="FunFam" id="3.40.250.10:FF:000008">
    <property type="entry name" value="Sulfurtransferase"/>
    <property type="match status" value="1"/>
</dbReference>
<dbReference type="Gene3D" id="3.40.250.10">
    <property type="entry name" value="Rhodanese-like domain"/>
    <property type="match status" value="2"/>
</dbReference>
<dbReference type="InterPro" id="IPR001763">
    <property type="entry name" value="Rhodanese-like_dom"/>
</dbReference>
<dbReference type="InterPro" id="IPR036873">
    <property type="entry name" value="Rhodanese-like_dom_sf"/>
</dbReference>
<dbReference type="InterPro" id="IPR001307">
    <property type="entry name" value="Thiosulphate_STrfase_CS"/>
</dbReference>
<dbReference type="InterPro" id="IPR045078">
    <property type="entry name" value="TST/MPST-like"/>
</dbReference>
<dbReference type="PANTHER" id="PTHR11364">
    <property type="entry name" value="THIOSULFATE SULFERTANSFERASE"/>
    <property type="match status" value="1"/>
</dbReference>
<dbReference type="PANTHER" id="PTHR11364:SF6">
    <property type="entry name" value="THIOSULFATE SULFURTRANSFERASE"/>
    <property type="match status" value="1"/>
</dbReference>
<dbReference type="Pfam" id="PF00581">
    <property type="entry name" value="Rhodanese"/>
    <property type="match status" value="2"/>
</dbReference>
<dbReference type="SMART" id="SM00450">
    <property type="entry name" value="RHOD"/>
    <property type="match status" value="2"/>
</dbReference>
<dbReference type="SUPFAM" id="SSF52821">
    <property type="entry name" value="Rhodanese/Cell cycle control phosphatase"/>
    <property type="match status" value="2"/>
</dbReference>
<dbReference type="PROSITE" id="PS00380">
    <property type="entry name" value="RHODANESE_1"/>
    <property type="match status" value="1"/>
</dbReference>
<dbReference type="PROSITE" id="PS00683">
    <property type="entry name" value="RHODANESE_2"/>
    <property type="match status" value="1"/>
</dbReference>
<dbReference type="PROSITE" id="PS50206">
    <property type="entry name" value="RHODANESE_3"/>
    <property type="match status" value="2"/>
</dbReference>
<organism>
    <name type="scientific">Mus musculus</name>
    <name type="common">Mouse</name>
    <dbReference type="NCBI Taxonomy" id="10090"/>
    <lineage>
        <taxon>Eukaryota</taxon>
        <taxon>Metazoa</taxon>
        <taxon>Chordata</taxon>
        <taxon>Craniata</taxon>
        <taxon>Vertebrata</taxon>
        <taxon>Euteleostomi</taxon>
        <taxon>Mammalia</taxon>
        <taxon>Eutheria</taxon>
        <taxon>Euarchontoglires</taxon>
        <taxon>Glires</taxon>
        <taxon>Rodentia</taxon>
        <taxon>Myomorpha</taxon>
        <taxon>Muroidea</taxon>
        <taxon>Muridae</taxon>
        <taxon>Murinae</taxon>
        <taxon>Mus</taxon>
        <taxon>Mus</taxon>
    </lineage>
</organism>
<feature type="chain" id="PRO_0000139396" description="Thiosulfate sulfurtransferase">
    <location>
        <begin position="1"/>
        <end position="297"/>
    </location>
</feature>
<feature type="domain" description="Rhodanese 1" evidence="3">
    <location>
        <begin position="25"/>
        <end position="143"/>
    </location>
</feature>
<feature type="domain" description="Rhodanese 2" evidence="3">
    <location>
        <begin position="173"/>
        <end position="288"/>
    </location>
</feature>
<feature type="region of interest" description="Hinge">
    <location>
        <begin position="144"/>
        <end position="159"/>
    </location>
</feature>
<feature type="active site" description="Cysteine persulfide intermediate" evidence="3">
    <location>
        <position position="248"/>
    </location>
</feature>
<feature type="binding site" evidence="1">
    <location>
        <position position="187"/>
    </location>
    <ligand>
        <name>substrate</name>
    </ligand>
</feature>
<feature type="binding site" evidence="1">
    <location>
        <position position="250"/>
    </location>
    <ligand>
        <name>substrate</name>
    </ligand>
</feature>
<feature type="modified residue" description="N6-acetyllysine; alternate" evidence="4">
    <location>
        <position position="14"/>
    </location>
</feature>
<feature type="modified residue" description="N6-succinyllysine; alternate" evidence="5">
    <location>
        <position position="14"/>
    </location>
</feature>
<feature type="modified residue" description="Phosphoserine" evidence="2">
    <location>
        <position position="38"/>
    </location>
</feature>
<feature type="modified residue" description="N6-acetyllysine; alternate" evidence="4">
    <location>
        <position position="136"/>
    </location>
</feature>
<feature type="modified residue" description="N6-succinyllysine; alternate" evidence="5">
    <location>
        <position position="136"/>
    </location>
</feature>
<feature type="modified residue" description="N6-acetyllysine" evidence="4">
    <location>
        <position position="163"/>
    </location>
</feature>
<feature type="modified residue" description="N6-acetyllysine; alternate" evidence="4">
    <location>
        <position position="175"/>
    </location>
</feature>
<feature type="modified residue" description="N6-succinyllysine; alternate" evidence="5">
    <location>
        <position position="175"/>
    </location>
</feature>
<feature type="modified residue" description="N6-acetyllysine; alternate" evidence="4">
    <location>
        <position position="219"/>
    </location>
</feature>
<feature type="modified residue" description="N6-succinyllysine; alternate" evidence="5">
    <location>
        <position position="219"/>
    </location>
</feature>
<feature type="modified residue" description="N6-acetyllysine; alternate" evidence="4">
    <location>
        <position position="224"/>
    </location>
</feature>
<feature type="modified residue" description="N6-succinyllysine; alternate" evidence="5">
    <location>
        <position position="224"/>
    </location>
</feature>
<feature type="modified residue" description="N6-acetyllysine" evidence="4">
    <location>
        <position position="236"/>
    </location>
</feature>
<feature type="modified residue" description="N6-acetyllysine; alternate" evidence="4">
    <location>
        <position position="237"/>
    </location>
</feature>
<feature type="modified residue" description="N6-succinyllysine; alternate" evidence="5">
    <location>
        <position position="237"/>
    </location>
</feature>
<feature type="glycosylation site" description="O-linked (GlcNAc) serine" evidence="1">
    <location>
        <position position="35"/>
    </location>
</feature>
<accession>P52196</accession>
<reference key="1">
    <citation type="journal article" date="1995" name="Biochem. Biophys. Res. Commun.">
        <title>Mouse rhodanese gene (Tst): cDNA cloning, sequencing, and recombinant protein expression.</title>
        <authorList>
            <person name="Dooley T.P."/>
            <person name="Nair S.K."/>
            <person name="Garcia R.E."/>
            <person name="Courtney B.C."/>
        </authorList>
    </citation>
    <scope>NUCLEOTIDE SEQUENCE [MRNA]</scope>
    <source>
        <strain>BALB/cJ</strain>
        <tissue>Liver</tissue>
    </source>
</reference>
<reference key="2">
    <citation type="journal article" date="2004" name="Genome Res.">
        <title>The status, quality, and expansion of the NIH full-length cDNA project: the Mammalian Gene Collection (MGC).</title>
        <authorList>
            <consortium name="The MGC Project Team"/>
        </authorList>
    </citation>
    <scope>NUCLEOTIDE SEQUENCE [LARGE SCALE MRNA]</scope>
    <source>
        <strain>NMRI</strain>
        <tissue>Mammary gland</tissue>
    </source>
</reference>
<reference key="3">
    <citation type="journal article" date="2010" name="Cell">
        <title>A tissue-specific atlas of mouse protein phosphorylation and expression.</title>
        <authorList>
            <person name="Huttlin E.L."/>
            <person name="Jedrychowski M.P."/>
            <person name="Elias J.E."/>
            <person name="Goswami T."/>
            <person name="Rad R."/>
            <person name="Beausoleil S.A."/>
            <person name="Villen J."/>
            <person name="Haas W."/>
            <person name="Sowa M.E."/>
            <person name="Gygi S.P."/>
        </authorList>
    </citation>
    <scope>IDENTIFICATION BY MASS SPECTROMETRY [LARGE SCALE ANALYSIS]</scope>
    <source>
        <tissue>Brain</tissue>
        <tissue>Brown adipose tissue</tissue>
        <tissue>Heart</tissue>
        <tissue>Kidney</tissue>
        <tissue>Liver</tissue>
        <tissue>Lung</tissue>
        <tissue>Pancreas</tissue>
        <tissue>Spleen</tissue>
        <tissue>Testis</tissue>
    </source>
</reference>
<reference key="4">
    <citation type="journal article" date="2013" name="Mol. Cell">
        <title>SIRT5-mediated lysine desuccinylation impacts diverse metabolic pathways.</title>
        <authorList>
            <person name="Park J."/>
            <person name="Chen Y."/>
            <person name="Tishkoff D.X."/>
            <person name="Peng C."/>
            <person name="Tan M."/>
            <person name="Dai L."/>
            <person name="Xie Z."/>
            <person name="Zhang Y."/>
            <person name="Zwaans B.M."/>
            <person name="Skinner M.E."/>
            <person name="Lombard D.B."/>
            <person name="Zhao Y."/>
        </authorList>
    </citation>
    <scope>SUCCINYLATION [LARGE SCALE ANALYSIS] AT LYS-14; LYS-136; LYS-175; LYS-219; LYS-224 AND LYS-237</scope>
    <scope>IDENTIFICATION BY MASS SPECTROMETRY [LARGE SCALE ANALYSIS]</scope>
    <source>
        <tissue>Liver</tissue>
    </source>
</reference>
<reference key="5">
    <citation type="journal article" date="2013" name="Proc. Natl. Acad. Sci. U.S.A.">
        <title>Label-free quantitative proteomics of the lysine acetylome in mitochondria identifies substrates of SIRT3 in metabolic pathways.</title>
        <authorList>
            <person name="Rardin M.J."/>
            <person name="Newman J.C."/>
            <person name="Held J.M."/>
            <person name="Cusack M.P."/>
            <person name="Sorensen D.J."/>
            <person name="Li B."/>
            <person name="Schilling B."/>
            <person name="Mooney S.D."/>
            <person name="Kahn C.R."/>
            <person name="Verdin E."/>
            <person name="Gibson B.W."/>
        </authorList>
    </citation>
    <scope>ACETYLATION [LARGE SCALE ANALYSIS] AT LYS-14; LYS-136; LYS-163; LYS-175; LYS-219; LYS-224; LYS-236 AND LYS-237</scope>
    <scope>IDENTIFICATION BY MASS SPECTROMETRY [LARGE SCALE ANALYSIS]</scope>
    <source>
        <tissue>Liver</tissue>
    </source>
</reference>
<comment type="function">
    <text evidence="1">Together with MRPL18, acts as a mitochondrial import factor for the cytosolic 5S rRNA. Only the nascent unfolded cytoplasmic form is able to bind to the 5S rRNA (By similarity). Formation of iron-sulfur complexes and cyanide detoxification.</text>
</comment>
<comment type="catalytic activity">
    <reaction>
        <text>thiosulfate + hydrogen cyanide = thiocyanate + sulfite + 2 H(+)</text>
        <dbReference type="Rhea" id="RHEA:16881"/>
        <dbReference type="ChEBI" id="CHEBI:15378"/>
        <dbReference type="ChEBI" id="CHEBI:17359"/>
        <dbReference type="ChEBI" id="CHEBI:18022"/>
        <dbReference type="ChEBI" id="CHEBI:18407"/>
        <dbReference type="ChEBI" id="CHEBI:33542"/>
        <dbReference type="EC" id="2.8.1.1"/>
    </reaction>
</comment>
<comment type="subunit">
    <text>Monomer.</text>
</comment>
<comment type="subcellular location">
    <subcellularLocation>
        <location>Mitochondrion matrix</location>
    </subcellularLocation>
</comment>
<comment type="tissue specificity">
    <text>Expressed in numerous tissues.</text>
</comment>
<comment type="domain">
    <text evidence="1">Contains two rhodanese domains with different primary structures but with near identical secondary structure conformations suggesting a common evolutionary origin. Only the C-terminal rhodanese domain contains the catalytic cysteine residue (By similarity).</text>
</comment>
<name>THTR_MOUSE</name>
<gene>
    <name type="primary">Tst</name>
</gene>
<evidence type="ECO:0000250" key="1"/>
<evidence type="ECO:0000250" key="2">
    <source>
        <dbReference type="UniProtKB" id="P24329"/>
    </source>
</evidence>
<evidence type="ECO:0000255" key="3">
    <source>
        <dbReference type="PROSITE-ProRule" id="PRU00173"/>
    </source>
</evidence>
<evidence type="ECO:0007744" key="4">
    <source>
    </source>
</evidence>
<evidence type="ECO:0007744" key="5">
    <source>
    </source>
</evidence>
<sequence length="297" mass="33466">MVHQVLYRALVSTKWLAESIRSGRLGPSLRVLDASWYSPGTRQARKEYQERHVPGASFFDIEECRDTTSPYEMMLPSEAHFGDYVGNLGISNDTHVVVYDGDDLGSFYAPRVWWMFRVFGHRTVSVLNGGFRNWLKEGHPVTSEPSRPEPAVFKATLNLSLLKTYEQVLENLQSKRFQLVDSRAQGRYLGTQPEPDIVGLDSGHIRGSVNMPFMDFLTKDGFEKSPEELRAIFQDKKVDLSQPLIATCRKGVTACHVALAAYLCGKPDVAVYDGSWSEWFRRAPPETRVSQGKSGKA</sequence>